<organism>
    <name type="scientific">Salmonella typhi</name>
    <dbReference type="NCBI Taxonomy" id="90370"/>
    <lineage>
        <taxon>Bacteria</taxon>
        <taxon>Pseudomonadati</taxon>
        <taxon>Pseudomonadota</taxon>
        <taxon>Gammaproteobacteria</taxon>
        <taxon>Enterobacterales</taxon>
        <taxon>Enterobacteriaceae</taxon>
        <taxon>Salmonella</taxon>
    </lineage>
</organism>
<sequence>MAPPLSPGSRVLIALIRVYQRLISPLLGPHCRFTPTCSSYGIEALRRFGVIKGSWLTVKRVLKCHPLHPGGDDPVPPGPFDTREH</sequence>
<reference key="1">
    <citation type="journal article" date="2001" name="Nature">
        <title>Complete genome sequence of a multiple drug resistant Salmonella enterica serovar Typhi CT18.</title>
        <authorList>
            <person name="Parkhill J."/>
            <person name="Dougan G."/>
            <person name="James K.D."/>
            <person name="Thomson N.R."/>
            <person name="Pickard D."/>
            <person name="Wain J."/>
            <person name="Churcher C.M."/>
            <person name="Mungall K.L."/>
            <person name="Bentley S.D."/>
            <person name="Holden M.T.G."/>
            <person name="Sebaihia M."/>
            <person name="Baker S."/>
            <person name="Basham D."/>
            <person name="Brooks K."/>
            <person name="Chillingworth T."/>
            <person name="Connerton P."/>
            <person name="Cronin A."/>
            <person name="Davis P."/>
            <person name="Davies R.M."/>
            <person name="Dowd L."/>
            <person name="White N."/>
            <person name="Farrar J."/>
            <person name="Feltwell T."/>
            <person name="Hamlin N."/>
            <person name="Haque A."/>
            <person name="Hien T.T."/>
            <person name="Holroyd S."/>
            <person name="Jagels K."/>
            <person name="Krogh A."/>
            <person name="Larsen T.S."/>
            <person name="Leather S."/>
            <person name="Moule S."/>
            <person name="O'Gaora P."/>
            <person name="Parry C."/>
            <person name="Quail M.A."/>
            <person name="Rutherford K.M."/>
            <person name="Simmonds M."/>
            <person name="Skelton J."/>
            <person name="Stevens K."/>
            <person name="Whitehead S."/>
            <person name="Barrell B.G."/>
        </authorList>
    </citation>
    <scope>NUCLEOTIDE SEQUENCE [LARGE SCALE GENOMIC DNA]</scope>
    <source>
        <strain>CT18</strain>
    </source>
</reference>
<reference key="2">
    <citation type="journal article" date="2003" name="J. Bacteriol.">
        <title>Comparative genomics of Salmonella enterica serovar Typhi strains Ty2 and CT18.</title>
        <authorList>
            <person name="Deng W."/>
            <person name="Liou S.-R."/>
            <person name="Plunkett G. III"/>
            <person name="Mayhew G.F."/>
            <person name="Rose D.J."/>
            <person name="Burland V."/>
            <person name="Kodoyianni V."/>
            <person name="Schwartz D.C."/>
            <person name="Blattner F.R."/>
        </authorList>
    </citation>
    <scope>NUCLEOTIDE SEQUENCE [LARGE SCALE GENOMIC DNA]</scope>
    <source>
        <strain>ATCC 700931 / Ty2</strain>
    </source>
</reference>
<name>YIDD_SALTI</name>
<accession>P61472</accession>
<protein>
    <recommendedName>
        <fullName evidence="1">Putative membrane protein insertion efficiency factor</fullName>
    </recommendedName>
</protein>
<evidence type="ECO:0000255" key="1">
    <source>
        <dbReference type="HAMAP-Rule" id="MF_00386"/>
    </source>
</evidence>
<proteinExistence type="inferred from homology"/>
<gene>
    <name evidence="1" type="primary">yidD</name>
    <name type="ordered locus">STY3938.1</name>
    <name type="ordered locus">t3678.1</name>
</gene>
<keyword id="KW-0997">Cell inner membrane</keyword>
<keyword id="KW-1003">Cell membrane</keyword>
<keyword id="KW-0472">Membrane</keyword>
<feature type="chain" id="PRO_0000171862" description="Putative membrane protein insertion efficiency factor">
    <location>
        <begin position="1"/>
        <end position="85"/>
    </location>
</feature>
<dbReference type="EMBL" id="AL513382">
    <property type="status" value="NOT_ANNOTATED_CDS"/>
    <property type="molecule type" value="Genomic_DNA"/>
</dbReference>
<dbReference type="EMBL" id="AE014613">
    <property type="status" value="NOT_ANNOTATED_CDS"/>
    <property type="molecule type" value="Genomic_DNA"/>
</dbReference>
<dbReference type="RefSeq" id="WP_001307474.1">
    <property type="nucleotide sequence ID" value="NZ_WSUR01000023.1"/>
</dbReference>
<dbReference type="GeneID" id="97443257"/>
<dbReference type="PATRIC" id="fig|90370.929.peg.3112"/>
<dbReference type="OMA" id="FHPGGHD"/>
<dbReference type="OrthoDB" id="9801753at2"/>
<dbReference type="Proteomes" id="UP000000541">
    <property type="component" value="Chromosome"/>
</dbReference>
<dbReference type="Proteomes" id="UP000002670">
    <property type="component" value="Chromosome"/>
</dbReference>
<dbReference type="GO" id="GO:0005886">
    <property type="term" value="C:plasma membrane"/>
    <property type="evidence" value="ECO:0007669"/>
    <property type="project" value="UniProtKB-SubCell"/>
</dbReference>
<dbReference type="HAMAP" id="MF_00386">
    <property type="entry name" value="UPF0161_YidD"/>
    <property type="match status" value="1"/>
</dbReference>
<dbReference type="InterPro" id="IPR002696">
    <property type="entry name" value="Membr_insert_effic_factor_YidD"/>
</dbReference>
<dbReference type="NCBIfam" id="TIGR00278">
    <property type="entry name" value="membrane protein insertion efficiency factor YidD"/>
    <property type="match status" value="1"/>
</dbReference>
<dbReference type="PANTHER" id="PTHR33383">
    <property type="entry name" value="MEMBRANE PROTEIN INSERTION EFFICIENCY FACTOR-RELATED"/>
    <property type="match status" value="1"/>
</dbReference>
<dbReference type="PANTHER" id="PTHR33383:SF1">
    <property type="entry name" value="MEMBRANE PROTEIN INSERTION EFFICIENCY FACTOR-RELATED"/>
    <property type="match status" value="1"/>
</dbReference>
<dbReference type="Pfam" id="PF01809">
    <property type="entry name" value="YidD"/>
    <property type="match status" value="1"/>
</dbReference>
<dbReference type="SMART" id="SM01234">
    <property type="entry name" value="Haemolytic"/>
    <property type="match status" value="1"/>
</dbReference>
<comment type="function">
    <text evidence="1">Could be involved in insertion of integral membrane proteins into the membrane.</text>
</comment>
<comment type="subcellular location">
    <subcellularLocation>
        <location evidence="1">Cell inner membrane</location>
        <topology evidence="1">Peripheral membrane protein</topology>
        <orientation evidence="1">Cytoplasmic side</orientation>
    </subcellularLocation>
</comment>
<comment type="similarity">
    <text evidence="1">Belongs to the UPF0161 family.</text>
</comment>